<sequence>MIKIIIGYVLDLIIGDPNNPYHPIRYIGKLASNMEKLWRKVFKKNLKIAGFFAWLFIVFITFGVTLGIVHIANKINPILGTVVSGILIYFCISAKGLKVEGLKVIKILKEGDIVKARKQLSYIVGRDTENLDEEAIVRAVVETVAENMSDGIIAPLFFAGIGGAPLAFLYKAVNTCDSMFGYKNEKYKDFGFFSAKLDDVFNYIPARLTAYLIVISSFILRLNCKNIFKIYKRDRYNHSSPNSAHPEAAVAGALGIRLGGANYYFGKLVEKPTIGDAKKKIEISDVYKTNNILGMVSFLGMVVALIIRCILEVII</sequence>
<comment type="function">
    <text evidence="1">Converts cobyric acid to cobinamide by the addition of aminopropanol on the F carboxylic group.</text>
</comment>
<comment type="pathway">
    <text evidence="1">Cofactor biosynthesis; adenosylcobalamin biosynthesis.</text>
</comment>
<comment type="subcellular location">
    <subcellularLocation>
        <location evidence="1">Cell membrane</location>
        <topology evidence="1">Multi-pass membrane protein</topology>
    </subcellularLocation>
</comment>
<comment type="similarity">
    <text evidence="1">Belongs to the CobD/CbiB family.</text>
</comment>
<organism>
    <name type="scientific">Clostridium perfringens (strain 13 / Type A)</name>
    <dbReference type="NCBI Taxonomy" id="195102"/>
    <lineage>
        <taxon>Bacteria</taxon>
        <taxon>Bacillati</taxon>
        <taxon>Bacillota</taxon>
        <taxon>Clostridia</taxon>
        <taxon>Eubacteriales</taxon>
        <taxon>Clostridiaceae</taxon>
        <taxon>Clostridium</taxon>
    </lineage>
</organism>
<dbReference type="EMBL" id="BA000016">
    <property type="protein sequence ID" value="BAB80745.1"/>
    <property type="molecule type" value="Genomic_DNA"/>
</dbReference>
<dbReference type="RefSeq" id="WP_011010194.1">
    <property type="nucleotide sequence ID" value="NC_003366.1"/>
</dbReference>
<dbReference type="STRING" id="195102.gene:10490302"/>
<dbReference type="KEGG" id="cpe:CPE1039"/>
<dbReference type="HOGENOM" id="CLU_054212_0_0_9"/>
<dbReference type="UniPathway" id="UPA00148"/>
<dbReference type="Proteomes" id="UP000000818">
    <property type="component" value="Chromosome"/>
</dbReference>
<dbReference type="GO" id="GO:0005886">
    <property type="term" value="C:plasma membrane"/>
    <property type="evidence" value="ECO:0007669"/>
    <property type="project" value="UniProtKB-SubCell"/>
</dbReference>
<dbReference type="GO" id="GO:0015420">
    <property type="term" value="F:ABC-type vitamin B12 transporter activity"/>
    <property type="evidence" value="ECO:0007669"/>
    <property type="project" value="UniProtKB-UniRule"/>
</dbReference>
<dbReference type="GO" id="GO:0048472">
    <property type="term" value="F:threonine-phosphate decarboxylase activity"/>
    <property type="evidence" value="ECO:0007669"/>
    <property type="project" value="InterPro"/>
</dbReference>
<dbReference type="GO" id="GO:0009236">
    <property type="term" value="P:cobalamin biosynthetic process"/>
    <property type="evidence" value="ECO:0007669"/>
    <property type="project" value="UniProtKB-UniRule"/>
</dbReference>
<dbReference type="HAMAP" id="MF_00024">
    <property type="entry name" value="CobD_CbiB"/>
    <property type="match status" value="1"/>
</dbReference>
<dbReference type="InterPro" id="IPR004485">
    <property type="entry name" value="Cobalamin_biosynth_CobD/CbiB"/>
</dbReference>
<dbReference type="NCBIfam" id="TIGR00380">
    <property type="entry name" value="cobal_cbiB"/>
    <property type="match status" value="1"/>
</dbReference>
<dbReference type="PANTHER" id="PTHR34308">
    <property type="entry name" value="COBALAMIN BIOSYNTHESIS PROTEIN CBIB"/>
    <property type="match status" value="1"/>
</dbReference>
<dbReference type="PANTHER" id="PTHR34308:SF1">
    <property type="entry name" value="COBALAMIN BIOSYNTHESIS PROTEIN CBIB"/>
    <property type="match status" value="1"/>
</dbReference>
<dbReference type="Pfam" id="PF03186">
    <property type="entry name" value="CobD_Cbib"/>
    <property type="match status" value="1"/>
</dbReference>
<proteinExistence type="inferred from homology"/>
<reference key="1">
    <citation type="journal article" date="2002" name="Proc. Natl. Acad. Sci. U.S.A.">
        <title>Complete genome sequence of Clostridium perfringens, an anaerobic flesh-eater.</title>
        <authorList>
            <person name="Shimizu T."/>
            <person name="Ohtani K."/>
            <person name="Hirakawa H."/>
            <person name="Ohshima K."/>
            <person name="Yamashita A."/>
            <person name="Shiba T."/>
            <person name="Ogasawara N."/>
            <person name="Hattori M."/>
            <person name="Kuhara S."/>
            <person name="Hayashi H."/>
        </authorList>
    </citation>
    <scope>NUCLEOTIDE SEQUENCE [LARGE SCALE GENOMIC DNA]</scope>
    <source>
        <strain>13 / Type A</strain>
    </source>
</reference>
<name>COBD_CLOPE</name>
<gene>
    <name evidence="1" type="primary">cobD</name>
    <name type="ordered locus">CPE1039</name>
</gene>
<keyword id="KW-1003">Cell membrane</keyword>
<keyword id="KW-0169">Cobalamin biosynthesis</keyword>
<keyword id="KW-0472">Membrane</keyword>
<keyword id="KW-1185">Reference proteome</keyword>
<keyword id="KW-0812">Transmembrane</keyword>
<keyword id="KW-1133">Transmembrane helix</keyword>
<feature type="chain" id="PRO_0000150925" description="Cobalamin biosynthesis protein CobD">
    <location>
        <begin position="1"/>
        <end position="315"/>
    </location>
</feature>
<feature type="transmembrane region" description="Helical" evidence="1">
    <location>
        <begin position="48"/>
        <end position="68"/>
    </location>
</feature>
<feature type="transmembrane region" description="Helical" evidence="1">
    <location>
        <begin position="77"/>
        <end position="97"/>
    </location>
</feature>
<feature type="transmembrane region" description="Helical" evidence="1">
    <location>
        <begin position="150"/>
        <end position="170"/>
    </location>
</feature>
<feature type="transmembrane region" description="Helical" evidence="1">
    <location>
        <begin position="200"/>
        <end position="220"/>
    </location>
</feature>
<feature type="transmembrane region" description="Helical" evidence="1">
    <location>
        <begin position="295"/>
        <end position="315"/>
    </location>
</feature>
<accession>Q8XLK2</accession>
<evidence type="ECO:0000255" key="1">
    <source>
        <dbReference type="HAMAP-Rule" id="MF_00024"/>
    </source>
</evidence>
<protein>
    <recommendedName>
        <fullName evidence="1">Cobalamin biosynthesis protein CobD</fullName>
    </recommendedName>
</protein>